<gene>
    <name evidence="4" type="primary">MFI</name>
    <name type="synonym">C11orf65</name>
</gene>
<evidence type="ECO:0000250" key="1">
    <source>
        <dbReference type="UniProtKB" id="Q9D4W2"/>
    </source>
</evidence>
<evidence type="ECO:0000269" key="2">
    <source>
    </source>
</evidence>
<evidence type="ECO:0000303" key="3">
    <source>
    </source>
</evidence>
<evidence type="ECO:0000303" key="4">
    <source>
    </source>
</evidence>
<evidence type="ECO:0000305" key="5"/>
<organism>
    <name type="scientific">Homo sapiens</name>
    <name type="common">Human</name>
    <dbReference type="NCBI Taxonomy" id="9606"/>
    <lineage>
        <taxon>Eukaryota</taxon>
        <taxon>Metazoa</taxon>
        <taxon>Chordata</taxon>
        <taxon>Craniata</taxon>
        <taxon>Vertebrata</taxon>
        <taxon>Euteleostomi</taxon>
        <taxon>Mammalia</taxon>
        <taxon>Eutheria</taxon>
        <taxon>Euarchontoglires</taxon>
        <taxon>Primates</taxon>
        <taxon>Haplorrhini</taxon>
        <taxon>Catarrhini</taxon>
        <taxon>Hominidae</taxon>
        <taxon>Homo</taxon>
    </lineage>
</organism>
<name>MFI_HUMAN</name>
<feature type="chain" id="PRO_0000263665" description="Protein MFI">
    <location>
        <begin position="1"/>
        <end position="313"/>
    </location>
</feature>
<feature type="splice variant" id="VSP_056888" description="In isoform 2." evidence="3">
    <location>
        <begin position="28"/>
        <end position="76"/>
    </location>
</feature>
<feature type="splice variant" id="VSP_056889" description="In isoform 2." evidence="3">
    <original>FRFNQAQKNIYNYGGDISKMQMGIPDDTYYENVYQEPNVTRLTPDSTYGL</original>
    <variation>IFFRILFSIKMEYEEFLSSPTPANVNTILPQW</variation>
    <location>
        <begin position="264"/>
        <end position="313"/>
    </location>
</feature>
<dbReference type="EMBL" id="AK303096">
    <property type="protein sequence ID" value="BAG64206.1"/>
    <property type="molecule type" value="mRNA"/>
</dbReference>
<dbReference type="EMBL" id="AP001925">
    <property type="status" value="NOT_ANNOTATED_CDS"/>
    <property type="molecule type" value="Genomic_DNA"/>
</dbReference>
<dbReference type="EMBL" id="AP005718">
    <property type="status" value="NOT_ANNOTATED_CDS"/>
    <property type="molecule type" value="Genomic_DNA"/>
</dbReference>
<dbReference type="EMBL" id="BC029536">
    <property type="protein sequence ID" value="AAH29536.1"/>
    <property type="molecule type" value="mRNA"/>
</dbReference>
<dbReference type="CCDS" id="CCDS81622.1">
    <molecule id="Q8NCR3-2"/>
</dbReference>
<dbReference type="CCDS" id="CCDS8340.1">
    <molecule id="Q8NCR3-1"/>
</dbReference>
<dbReference type="RefSeq" id="NP_001317297.1">
    <molecule id="Q8NCR3-2"/>
    <property type="nucleotide sequence ID" value="NM_001330368.1"/>
</dbReference>
<dbReference type="RefSeq" id="NP_689800.3">
    <molecule id="Q8NCR3-1"/>
    <property type="nucleotide sequence ID" value="NM_152587.3"/>
</dbReference>
<dbReference type="RefSeq" id="XP_011540941.1">
    <property type="nucleotide sequence ID" value="XM_011542639.2"/>
</dbReference>
<dbReference type="RefSeq" id="XP_016872735.1">
    <property type="nucleotide sequence ID" value="XM_017017246.1"/>
</dbReference>
<dbReference type="SMR" id="Q8NCR3"/>
<dbReference type="BioGRID" id="127748">
    <property type="interactions" value="13"/>
</dbReference>
<dbReference type="FunCoup" id="Q8NCR3">
    <property type="interactions" value="25"/>
</dbReference>
<dbReference type="IntAct" id="Q8NCR3">
    <property type="interactions" value="19"/>
</dbReference>
<dbReference type="STRING" id="9606.ENSP00000483537"/>
<dbReference type="iPTMnet" id="Q8NCR3"/>
<dbReference type="PhosphoSitePlus" id="Q8NCR3"/>
<dbReference type="BioMuta" id="C11orf65"/>
<dbReference type="DMDM" id="74730167"/>
<dbReference type="MassIVE" id="Q8NCR3"/>
<dbReference type="PaxDb" id="9606-ENSP00000483537"/>
<dbReference type="PeptideAtlas" id="Q8NCR3"/>
<dbReference type="ProteomicsDB" id="5625"/>
<dbReference type="ProteomicsDB" id="72927">
    <molecule id="Q8NCR3-1"/>
</dbReference>
<dbReference type="Antibodypedia" id="50806">
    <property type="antibodies" value="66 antibodies from 12 providers"/>
</dbReference>
<dbReference type="DNASU" id="160140"/>
<dbReference type="Ensembl" id="ENST00000393084.6">
    <molecule id="Q8NCR3-1"/>
    <property type="protein sequence ID" value="ENSP00000376799.1"/>
    <property type="gene ID" value="ENSG00000166323.13"/>
</dbReference>
<dbReference type="Ensembl" id="ENST00000525729.5">
    <molecule id="Q8NCR3-2"/>
    <property type="protein sequence ID" value="ENSP00000433395.1"/>
    <property type="gene ID" value="ENSG00000166323.13"/>
</dbReference>
<dbReference type="Ensembl" id="ENST00000527531.5">
    <molecule id="Q8NCR3-1"/>
    <property type="protein sequence ID" value="ENSP00000431706.1"/>
    <property type="gene ID" value="ENSG00000166323.13"/>
</dbReference>
<dbReference type="Ensembl" id="ENST00000529391.5">
    <molecule id="Q8NCR3-1"/>
    <property type="protein sequence ID" value="ENSP00000436400.1"/>
    <property type="gene ID" value="ENSG00000166323.13"/>
</dbReference>
<dbReference type="Ensembl" id="ENST00000615746.4">
    <molecule id="Q8NCR3-1"/>
    <property type="protein sequence ID" value="ENSP00000483537.1"/>
    <property type="gene ID" value="ENSG00000166323.13"/>
</dbReference>
<dbReference type="GeneID" id="160140"/>
<dbReference type="KEGG" id="hsa:160140"/>
<dbReference type="MANE-Select" id="ENST00000393084.6">
    <property type="protein sequence ID" value="ENSP00000376799.1"/>
    <property type="RefSeq nucleotide sequence ID" value="NM_152587.5"/>
    <property type="RefSeq protein sequence ID" value="NP_689800.3"/>
</dbReference>
<dbReference type="UCSC" id="uc001pkh.3">
    <molecule id="Q8NCR3-1"/>
    <property type="organism name" value="human"/>
</dbReference>
<dbReference type="AGR" id="HGNC:28519"/>
<dbReference type="CTD" id="160140"/>
<dbReference type="DisGeNET" id="160140"/>
<dbReference type="GeneCards" id="C11orf65"/>
<dbReference type="HGNC" id="HGNC:28519">
    <property type="gene designation" value="C11orf65"/>
</dbReference>
<dbReference type="HPA" id="ENSG00000166323">
    <property type="expression patterns" value="Tissue enriched (testis)"/>
</dbReference>
<dbReference type="MalaCards" id="C11orf65"/>
<dbReference type="neXtProt" id="NX_Q8NCR3"/>
<dbReference type="OpenTargets" id="ENSG00000166323"/>
<dbReference type="PharmGKB" id="PA144596484"/>
<dbReference type="VEuPathDB" id="HostDB:ENSG00000166323"/>
<dbReference type="eggNOG" id="ENOG502QSTG">
    <property type="taxonomic scope" value="Eukaryota"/>
</dbReference>
<dbReference type="GeneTree" id="ENSGT00510000048394"/>
<dbReference type="HOGENOM" id="CLU_068479_1_0_1"/>
<dbReference type="InParanoid" id="Q8NCR3"/>
<dbReference type="OMA" id="KMDFHYS"/>
<dbReference type="OrthoDB" id="10253073at2759"/>
<dbReference type="PAN-GO" id="Q8NCR3">
    <property type="GO annotations" value="0 GO annotations based on evolutionary models"/>
</dbReference>
<dbReference type="PhylomeDB" id="Q8NCR3"/>
<dbReference type="TreeFam" id="TF328500"/>
<dbReference type="PathwayCommons" id="Q8NCR3"/>
<dbReference type="SignaLink" id="Q8NCR3"/>
<dbReference type="BioGRID-ORCS" id="160140">
    <property type="hits" value="20 hits in 1093 CRISPR screens"/>
</dbReference>
<dbReference type="ChiTaRS" id="C11orf65">
    <property type="organism name" value="human"/>
</dbReference>
<dbReference type="GenomeRNAi" id="160140"/>
<dbReference type="Pharos" id="Q8NCR3">
    <property type="development level" value="Tdark"/>
</dbReference>
<dbReference type="PRO" id="PR:Q8NCR3"/>
<dbReference type="Proteomes" id="UP000005640">
    <property type="component" value="Chromosome 11"/>
</dbReference>
<dbReference type="RNAct" id="Q8NCR3">
    <property type="molecule type" value="protein"/>
</dbReference>
<dbReference type="Bgee" id="ENSG00000166323">
    <property type="expression patterns" value="Expressed in sperm and 98 other cell types or tissues"/>
</dbReference>
<dbReference type="ExpressionAtlas" id="Q8NCR3">
    <property type="expression patterns" value="baseline and differential"/>
</dbReference>
<dbReference type="GO" id="GO:0005829">
    <property type="term" value="C:cytosol"/>
    <property type="evidence" value="ECO:0000250"/>
    <property type="project" value="UniProtKB"/>
</dbReference>
<dbReference type="GO" id="GO:0005741">
    <property type="term" value="C:mitochondrial outer membrane"/>
    <property type="evidence" value="ECO:0000250"/>
    <property type="project" value="UniProtKB"/>
</dbReference>
<dbReference type="GO" id="GO:0090258">
    <property type="term" value="P:negative regulation of mitochondrial fission"/>
    <property type="evidence" value="ECO:0000250"/>
    <property type="project" value="UniProtKB"/>
</dbReference>
<dbReference type="GO" id="GO:1903215">
    <property type="term" value="P:negative regulation of protein targeting to mitochondrion"/>
    <property type="evidence" value="ECO:0000250"/>
    <property type="project" value="UniProtKB"/>
</dbReference>
<dbReference type="CDD" id="cd21090">
    <property type="entry name" value="C11orf65"/>
    <property type="match status" value="1"/>
</dbReference>
<dbReference type="PANTHER" id="PTHR33504">
    <property type="entry name" value="NADH DEHYDROGENASE (UBIQUINONE) 1 BETA SUBCOMPLEX, 4"/>
    <property type="match status" value="1"/>
</dbReference>
<dbReference type="PANTHER" id="PTHR33504:SF2">
    <property type="entry name" value="PROTEIN MFI"/>
    <property type="match status" value="1"/>
</dbReference>
<comment type="function">
    <text evidence="1">Acts as an inhibitor of mitochondrial fission. Interacts with MFF and prevents DNM1L recruitment to mitochondria, promoting a more fused mitochondrial network.</text>
</comment>
<comment type="subunit">
    <text evidence="1">Can homodimerize. Interacts with MFF; the interaction inhibits MFF interaction with DNM1L.</text>
</comment>
<comment type="interaction">
    <interactant intactId="EBI-744790">
        <id>Q8NCR3</id>
    </interactant>
    <interactant intactId="EBI-2371423">
        <id>O43865</id>
        <label>AHCYL1</label>
    </interactant>
    <organismsDiffer>false</organismsDiffer>
    <experiments>3</experiments>
</comment>
<comment type="interaction">
    <interactant intactId="EBI-744790">
        <id>Q8NCR3</id>
    </interactant>
    <interactant intactId="EBI-745689">
        <id>Q7L5A3</id>
        <label>ATOSB</label>
    </interactant>
    <organismsDiffer>false</organismsDiffer>
    <experiments>3</experiments>
</comment>
<comment type="interaction">
    <interactant intactId="EBI-744790">
        <id>Q8NCR3</id>
    </interactant>
    <interactant intactId="EBI-4324545">
        <id>Q96HY3</id>
        <label>CALM1</label>
    </interactant>
    <organismsDiffer>false</organismsDiffer>
    <experiments>3</experiments>
</comment>
<comment type="interaction">
    <interactant intactId="EBI-744790">
        <id>Q8NCR3</id>
    </interactant>
    <interactant intactId="EBI-397435">
        <id>P62158</id>
        <label>CALM3</label>
    </interactant>
    <organismsDiffer>false</organismsDiffer>
    <experiments>3</experiments>
</comment>
<comment type="interaction">
    <interactant intactId="EBI-744790">
        <id>Q8NCR3</id>
    </interactant>
    <interactant intactId="EBI-747537">
        <id>P27482</id>
        <label>CALML3</label>
    </interactant>
    <organismsDiffer>false</organismsDiffer>
    <experiments>3</experiments>
</comment>
<comment type="interaction">
    <interactant intactId="EBI-744790">
        <id>Q8NCR3</id>
    </interactant>
    <interactant intactId="EBI-1049597">
        <id>P27797</id>
        <label>CALR</label>
    </interactant>
    <organismsDiffer>false</organismsDiffer>
    <experiments>3</experiments>
</comment>
<comment type="interaction">
    <interactant intactId="EBI-744790">
        <id>Q8NCR3</id>
    </interactant>
    <interactant intactId="EBI-727477">
        <id>P12830</id>
        <label>CDH1</label>
    </interactant>
    <organismsDiffer>false</organismsDiffer>
    <experiments>3</experiments>
</comment>
<comment type="interaction">
    <interactant intactId="EBI-744790">
        <id>Q8NCR3</id>
    </interactant>
    <interactant intactId="EBI-746189">
        <id>Q15078</id>
        <label>CDK5R1</label>
    </interactant>
    <organismsDiffer>false</organismsDiffer>
    <experiments>3</experiments>
</comment>
<comment type="interaction">
    <interactant intactId="EBI-744790">
        <id>Q8NCR3</id>
    </interactant>
    <interactant intactId="EBI-351007">
        <id>P36957</id>
        <label>DLST</label>
    </interactant>
    <organismsDiffer>false</organismsDiffer>
    <experiments>3</experiments>
</comment>
<comment type="interaction">
    <interactant intactId="EBI-744790">
        <id>Q8NCR3</id>
    </interactant>
    <interactant intactId="EBI-10171450">
        <id>B4DJ51</id>
        <label>HEL-S-72</label>
    </interactant>
    <organismsDiffer>false</organismsDiffer>
    <experiments>5</experiments>
</comment>
<comment type="interaction">
    <interactant intactId="EBI-744790">
        <id>Q8NCR3</id>
    </interactant>
    <interactant intactId="EBI-1055945">
        <id>Q8TDX7</id>
        <label>NEK7</label>
    </interactant>
    <organismsDiffer>false</organismsDiffer>
    <experiments>3</experiments>
</comment>
<comment type="interaction">
    <interactant intactId="EBI-744790">
        <id>Q8NCR3</id>
    </interactant>
    <interactant intactId="EBI-10296986">
        <id>Q9BRL5</id>
    </interactant>
    <organismsDiffer>false</organismsDiffer>
    <experiments>3</experiments>
</comment>
<comment type="subcellular location">
    <subcellularLocation>
        <location evidence="1">Cytoplasm</location>
        <location evidence="1">Cytosol</location>
    </subcellularLocation>
    <subcellularLocation>
        <location evidence="1">Mitochondrion outer membrane</location>
    </subcellularLocation>
    <text evidence="1">Predominantly localizes to the cytosol, with a minor fraction at the outer mitochondrial membrane.</text>
</comment>
<comment type="alternative products">
    <event type="alternative splicing"/>
    <isoform>
        <id>Q8NCR3-1</id>
        <name>1</name>
        <sequence type="displayed"/>
    </isoform>
    <isoform>
        <id>Q8NCR3-2</id>
        <name>2</name>
        <sequence type="described" ref="VSP_056888 VSP_056889"/>
    </isoform>
</comment>
<comment type="tissue specificity">
    <text evidence="2">Enriched in the pancreatic beta cell and the testis and is expressed at low levels in other tissues tested.</text>
</comment>
<reference key="1">
    <citation type="journal article" date="2004" name="Nat. Genet.">
        <title>Complete sequencing and characterization of 21,243 full-length human cDNAs.</title>
        <authorList>
            <person name="Ota T."/>
            <person name="Suzuki Y."/>
            <person name="Nishikawa T."/>
            <person name="Otsuki T."/>
            <person name="Sugiyama T."/>
            <person name="Irie R."/>
            <person name="Wakamatsu A."/>
            <person name="Hayashi K."/>
            <person name="Sato H."/>
            <person name="Nagai K."/>
            <person name="Kimura K."/>
            <person name="Makita H."/>
            <person name="Sekine M."/>
            <person name="Obayashi M."/>
            <person name="Nishi T."/>
            <person name="Shibahara T."/>
            <person name="Tanaka T."/>
            <person name="Ishii S."/>
            <person name="Yamamoto J."/>
            <person name="Saito K."/>
            <person name="Kawai Y."/>
            <person name="Isono Y."/>
            <person name="Nakamura Y."/>
            <person name="Nagahari K."/>
            <person name="Murakami K."/>
            <person name="Yasuda T."/>
            <person name="Iwayanagi T."/>
            <person name="Wagatsuma M."/>
            <person name="Shiratori A."/>
            <person name="Sudo H."/>
            <person name="Hosoiri T."/>
            <person name="Kaku Y."/>
            <person name="Kodaira H."/>
            <person name="Kondo H."/>
            <person name="Sugawara M."/>
            <person name="Takahashi M."/>
            <person name="Kanda K."/>
            <person name="Yokoi T."/>
            <person name="Furuya T."/>
            <person name="Kikkawa E."/>
            <person name="Omura Y."/>
            <person name="Abe K."/>
            <person name="Kamihara K."/>
            <person name="Katsuta N."/>
            <person name="Sato K."/>
            <person name="Tanikawa M."/>
            <person name="Yamazaki M."/>
            <person name="Ninomiya K."/>
            <person name="Ishibashi T."/>
            <person name="Yamashita H."/>
            <person name="Murakawa K."/>
            <person name="Fujimori K."/>
            <person name="Tanai H."/>
            <person name="Kimata M."/>
            <person name="Watanabe M."/>
            <person name="Hiraoka S."/>
            <person name="Chiba Y."/>
            <person name="Ishida S."/>
            <person name="Ono Y."/>
            <person name="Takiguchi S."/>
            <person name="Watanabe S."/>
            <person name="Yosida M."/>
            <person name="Hotuta T."/>
            <person name="Kusano J."/>
            <person name="Kanehori K."/>
            <person name="Takahashi-Fujii A."/>
            <person name="Hara H."/>
            <person name="Tanase T.-O."/>
            <person name="Nomura Y."/>
            <person name="Togiya S."/>
            <person name="Komai F."/>
            <person name="Hara R."/>
            <person name="Takeuchi K."/>
            <person name="Arita M."/>
            <person name="Imose N."/>
            <person name="Musashino K."/>
            <person name="Yuuki H."/>
            <person name="Oshima A."/>
            <person name="Sasaki N."/>
            <person name="Aotsuka S."/>
            <person name="Yoshikawa Y."/>
            <person name="Matsunawa H."/>
            <person name="Ichihara T."/>
            <person name="Shiohata N."/>
            <person name="Sano S."/>
            <person name="Moriya S."/>
            <person name="Momiyama H."/>
            <person name="Satoh N."/>
            <person name="Takami S."/>
            <person name="Terashima Y."/>
            <person name="Suzuki O."/>
            <person name="Nakagawa S."/>
            <person name="Senoh A."/>
            <person name="Mizoguchi H."/>
            <person name="Goto Y."/>
            <person name="Shimizu F."/>
            <person name="Wakebe H."/>
            <person name="Hishigaki H."/>
            <person name="Watanabe T."/>
            <person name="Sugiyama A."/>
            <person name="Takemoto M."/>
            <person name="Kawakami B."/>
            <person name="Yamazaki M."/>
            <person name="Watanabe K."/>
            <person name="Kumagai A."/>
            <person name="Itakura S."/>
            <person name="Fukuzumi Y."/>
            <person name="Fujimori Y."/>
            <person name="Komiyama M."/>
            <person name="Tashiro H."/>
            <person name="Tanigami A."/>
            <person name="Fujiwara T."/>
            <person name="Ono T."/>
            <person name="Yamada K."/>
            <person name="Fujii Y."/>
            <person name="Ozaki K."/>
            <person name="Hirao M."/>
            <person name="Ohmori Y."/>
            <person name="Kawabata A."/>
            <person name="Hikiji T."/>
            <person name="Kobatake N."/>
            <person name="Inagaki H."/>
            <person name="Ikema Y."/>
            <person name="Okamoto S."/>
            <person name="Okitani R."/>
            <person name="Kawakami T."/>
            <person name="Noguchi S."/>
            <person name="Itoh T."/>
            <person name="Shigeta K."/>
            <person name="Senba T."/>
            <person name="Matsumura K."/>
            <person name="Nakajima Y."/>
            <person name="Mizuno T."/>
            <person name="Morinaga M."/>
            <person name="Sasaki M."/>
            <person name="Togashi T."/>
            <person name="Oyama M."/>
            <person name="Hata H."/>
            <person name="Watanabe M."/>
            <person name="Komatsu T."/>
            <person name="Mizushima-Sugano J."/>
            <person name="Satoh T."/>
            <person name="Shirai Y."/>
            <person name="Takahashi Y."/>
            <person name="Nakagawa K."/>
            <person name="Okumura K."/>
            <person name="Nagase T."/>
            <person name="Nomura N."/>
            <person name="Kikuchi H."/>
            <person name="Masuho Y."/>
            <person name="Yamashita R."/>
            <person name="Nakai K."/>
            <person name="Yada T."/>
            <person name="Nakamura Y."/>
            <person name="Ohara O."/>
            <person name="Isogai T."/>
            <person name="Sugano S."/>
        </authorList>
    </citation>
    <scope>NUCLEOTIDE SEQUENCE [LARGE SCALE MRNA] (ISOFORM 2)</scope>
    <source>
        <tissue>Thymus</tissue>
    </source>
</reference>
<reference key="2">
    <citation type="journal article" date="2006" name="Nature">
        <title>Human chromosome 11 DNA sequence and analysis including novel gene identification.</title>
        <authorList>
            <person name="Taylor T.D."/>
            <person name="Noguchi H."/>
            <person name="Totoki Y."/>
            <person name="Toyoda A."/>
            <person name="Kuroki Y."/>
            <person name="Dewar K."/>
            <person name="Lloyd C."/>
            <person name="Itoh T."/>
            <person name="Takeda T."/>
            <person name="Kim D.-W."/>
            <person name="She X."/>
            <person name="Barlow K.F."/>
            <person name="Bloom T."/>
            <person name="Bruford E."/>
            <person name="Chang J.L."/>
            <person name="Cuomo C.A."/>
            <person name="Eichler E."/>
            <person name="FitzGerald M.G."/>
            <person name="Jaffe D.B."/>
            <person name="LaButti K."/>
            <person name="Nicol R."/>
            <person name="Park H.-S."/>
            <person name="Seaman C."/>
            <person name="Sougnez C."/>
            <person name="Yang X."/>
            <person name="Zimmer A.R."/>
            <person name="Zody M.C."/>
            <person name="Birren B.W."/>
            <person name="Nusbaum C."/>
            <person name="Fujiyama A."/>
            <person name="Hattori M."/>
            <person name="Rogers J."/>
            <person name="Lander E.S."/>
            <person name="Sakaki Y."/>
        </authorList>
    </citation>
    <scope>NUCLEOTIDE SEQUENCE [LARGE SCALE GENOMIC DNA]</scope>
</reference>
<reference key="3">
    <citation type="journal article" date="2004" name="Genome Res.">
        <title>The status, quality, and expansion of the NIH full-length cDNA project: the Mammalian Gene Collection (MGC).</title>
        <authorList>
            <consortium name="The MGC Project Team"/>
        </authorList>
    </citation>
    <scope>NUCLEOTIDE SEQUENCE [LARGE SCALE MRNA] (ISOFORM 1)</scope>
    <source>
        <tissue>Testis</tissue>
    </source>
</reference>
<reference key="4">
    <citation type="journal article" date="2018" name="Endocrinology">
        <title>A Genetic Interaction Map of Insulin Production Identifies Mfi as an Inhibitor of Mitochondrial Fission.</title>
        <authorList>
            <person name="Lee J."/>
            <person name="Pappalardo Z."/>
            <person name="Chopra D.G."/>
            <person name="Hennings T.G."/>
            <person name="Vaughn I."/>
            <person name="Lan C."/>
            <person name="Choe J.J."/>
            <person name="Ang K."/>
            <person name="Chen S."/>
            <person name="Arkin M."/>
            <person name="McManus M.T."/>
            <person name="German M.S."/>
            <person name="Ku G.M."/>
        </authorList>
    </citation>
    <scope>TISSUE SPECIFICITY</scope>
</reference>
<keyword id="KW-0025">Alternative splicing</keyword>
<keyword id="KW-0963">Cytoplasm</keyword>
<keyword id="KW-0472">Membrane</keyword>
<keyword id="KW-0496">Mitochondrion</keyword>
<keyword id="KW-1000">Mitochondrion outer membrane</keyword>
<keyword id="KW-1267">Proteomics identification</keyword>
<keyword id="KW-1185">Reference proteome</keyword>
<sequence>MPWKEESEFTKQDKAARVIQQAWKSFLNVAIFQHFKSLIDLRRQGEPRQIVKYINPKEAELLDAAAGIHVRFRLGGVKFPPDIYYKIFTHRPIEDLCANSPRNYAKLPAKHTSHNKNDHLQEEDHSGWYHRIENNGWRPVSDTFWLSTDGMVVEDKKESEFHFSKLKRRQDLEKKRKLRKIEWMRQMYYSGSLEAKSTHHETLGLIHTATKGLIRAFEDGGIDSVMEWEVDEVLNWTNTLNFDEYIASWKEIATSNSSANFKGFRFNQAQKNIYNYGGDISKMQMGIPDDTYYENVYQEPNVTRLTPDSTYGL</sequence>
<proteinExistence type="evidence at protein level"/>
<accession>Q8NCR3</accession>
<accession>B4DZU4</accession>
<accession>Q6PCA8</accession>
<protein>
    <recommendedName>
        <fullName evidence="5">Protein MFI</fullName>
    </recommendedName>
    <alternativeName>
        <fullName evidence="4">Mitochondrial fission factor interactor</fullName>
    </alternativeName>
</protein>